<accession>P75688</accession>
<name>Y309_ECOLI</name>
<comment type="caution">
    <text evidence="1">Product of a dubious gene prediction.</text>
</comment>
<protein>
    <recommendedName>
        <fullName>Putative uncharacterized protein b0309</fullName>
    </recommendedName>
</protein>
<evidence type="ECO:0000305" key="1"/>
<dbReference type="EMBL" id="U00096">
    <property type="status" value="NOT_ANNOTATED_CDS"/>
    <property type="molecule type" value="Genomic_DNA"/>
</dbReference>
<dbReference type="PIR" id="E64757">
    <property type="entry name" value="E64757"/>
</dbReference>
<dbReference type="InParanoid" id="P75688"/>
<dbReference type="Proteomes" id="UP000000625">
    <property type="component" value="Chromosome"/>
</dbReference>
<keyword id="KW-1185">Reference proteome</keyword>
<proteinExistence type="uncertain"/>
<feature type="chain" id="PRO_0000223722" description="Putative uncharacterized protein b0309">
    <location>
        <begin position="1"/>
        <end position="70"/>
    </location>
</feature>
<sequence>MDACLFHCKYPGIGNTRIFTEEQHNHDGTGLSQVVLNAIFNLVCLLQVYVQTSYLSQQSSIIRYTAFTGP</sequence>
<reference key="1">
    <citation type="journal article" date="1997" name="Science">
        <title>The complete genome sequence of Escherichia coli K-12.</title>
        <authorList>
            <person name="Blattner F.R."/>
            <person name="Plunkett G. III"/>
            <person name="Bloch C.A."/>
            <person name="Perna N.T."/>
            <person name="Burland V."/>
            <person name="Riley M."/>
            <person name="Collado-Vides J."/>
            <person name="Glasner J.D."/>
            <person name="Rode C.K."/>
            <person name="Mayhew G.F."/>
            <person name="Gregor J."/>
            <person name="Davis N.W."/>
            <person name="Kirkpatrick H.A."/>
            <person name="Goeden M.A."/>
            <person name="Rose D.J."/>
            <person name="Mau B."/>
            <person name="Shao Y."/>
        </authorList>
    </citation>
    <scope>NUCLEOTIDE SEQUENCE [LARGE SCALE GENOMIC DNA]</scope>
    <source>
        <strain>K12 / MG1655 / ATCC 47076</strain>
    </source>
</reference>
<gene>
    <name type="ordered locus">b0309</name>
</gene>
<organism>
    <name type="scientific">Escherichia coli (strain K12)</name>
    <dbReference type="NCBI Taxonomy" id="83333"/>
    <lineage>
        <taxon>Bacteria</taxon>
        <taxon>Pseudomonadati</taxon>
        <taxon>Pseudomonadota</taxon>
        <taxon>Gammaproteobacteria</taxon>
        <taxon>Enterobacterales</taxon>
        <taxon>Enterobacteriaceae</taxon>
        <taxon>Escherichia</taxon>
    </lineage>
</organism>